<keyword id="KW-0903">Direct protein sequencing</keyword>
<keyword id="KW-1015">Disulfide bond</keyword>
<keyword id="KW-0325">Glycoprotein</keyword>
<keyword id="KW-0378">Hydrolase</keyword>
<keyword id="KW-0645">Protease</keyword>
<keyword id="KW-1267">Proteomics identification</keyword>
<keyword id="KW-1185">Reference proteome</keyword>
<keyword id="KW-0720">Serine protease</keyword>
<keyword id="KW-0732">Signal</keyword>
<keyword id="KW-0865">Zymogen</keyword>
<reference key="1">
    <citation type="journal article" date="1988" name="J. Biol. Chem.">
        <title>Identification of a novel class of elastase isozyme, human pancreatic elastase III, by cDNA and genomic gene cloning.</title>
        <authorList>
            <person name="Tani T."/>
            <person name="Ohsumi J."/>
            <person name="Mita K."/>
            <person name="Takiguchi Y."/>
        </authorList>
    </citation>
    <scope>NUCLEOTIDE SEQUENCE [GENOMIC DNA]</scope>
    <scope>VARIANT GLY-241</scope>
    <source>
        <tissue>Pancreas</tissue>
    </source>
</reference>
<reference key="2">
    <citation type="journal article" date="1988" name="J. Biochem.">
        <title>Molecular cloning of complementary DNA encoding one of the human pancreatic protease E isozymes.</title>
        <authorList>
            <person name="Shirasu Y."/>
            <person name="Takemura K."/>
            <person name="Yoshida H."/>
            <person name="Sato Y."/>
            <person name="Iijima H."/>
            <person name="Shimada Y."/>
            <person name="Mikayama T."/>
            <person name="Ozawa T."/>
            <person name="Ikeda N."/>
            <person name="Ishida A."/>
            <person name="Tamai Y."/>
            <person name="Matsuki S."/>
            <person name="Tanaka J."/>
            <person name="Ikenaga H."/>
            <person name="Ogawa M."/>
        </authorList>
    </citation>
    <scope>NUCLEOTIDE SEQUENCE [MRNA]</scope>
    <scope>PARTIAL PROTEIN SEQUENCE</scope>
    <scope>VARIANT GLY-241</scope>
    <source>
        <tissue>Pancreas</tissue>
    </source>
</reference>
<reference key="3">
    <citation type="journal article" date="2006" name="Nature">
        <title>The DNA sequence and biological annotation of human chromosome 1.</title>
        <authorList>
            <person name="Gregory S.G."/>
            <person name="Barlow K.F."/>
            <person name="McLay K.E."/>
            <person name="Kaul R."/>
            <person name="Swarbreck D."/>
            <person name="Dunham A."/>
            <person name="Scott C.E."/>
            <person name="Howe K.L."/>
            <person name="Woodfine K."/>
            <person name="Spencer C.C.A."/>
            <person name="Jones M.C."/>
            <person name="Gillson C."/>
            <person name="Searle S."/>
            <person name="Zhou Y."/>
            <person name="Kokocinski F."/>
            <person name="McDonald L."/>
            <person name="Evans R."/>
            <person name="Phillips K."/>
            <person name="Atkinson A."/>
            <person name="Cooper R."/>
            <person name="Jones C."/>
            <person name="Hall R.E."/>
            <person name="Andrews T.D."/>
            <person name="Lloyd C."/>
            <person name="Ainscough R."/>
            <person name="Almeida J.P."/>
            <person name="Ambrose K.D."/>
            <person name="Anderson F."/>
            <person name="Andrew R.W."/>
            <person name="Ashwell R.I.S."/>
            <person name="Aubin K."/>
            <person name="Babbage A.K."/>
            <person name="Bagguley C.L."/>
            <person name="Bailey J."/>
            <person name="Beasley H."/>
            <person name="Bethel G."/>
            <person name="Bird C.P."/>
            <person name="Bray-Allen S."/>
            <person name="Brown J.Y."/>
            <person name="Brown A.J."/>
            <person name="Buckley D."/>
            <person name="Burton J."/>
            <person name="Bye J."/>
            <person name="Carder C."/>
            <person name="Chapman J.C."/>
            <person name="Clark S.Y."/>
            <person name="Clarke G."/>
            <person name="Clee C."/>
            <person name="Cobley V."/>
            <person name="Collier R.E."/>
            <person name="Corby N."/>
            <person name="Coville G.J."/>
            <person name="Davies J."/>
            <person name="Deadman R."/>
            <person name="Dunn M."/>
            <person name="Earthrowl M."/>
            <person name="Ellington A.G."/>
            <person name="Errington H."/>
            <person name="Frankish A."/>
            <person name="Frankland J."/>
            <person name="French L."/>
            <person name="Garner P."/>
            <person name="Garnett J."/>
            <person name="Gay L."/>
            <person name="Ghori M.R.J."/>
            <person name="Gibson R."/>
            <person name="Gilby L.M."/>
            <person name="Gillett W."/>
            <person name="Glithero R.J."/>
            <person name="Grafham D.V."/>
            <person name="Griffiths C."/>
            <person name="Griffiths-Jones S."/>
            <person name="Grocock R."/>
            <person name="Hammond S."/>
            <person name="Harrison E.S.I."/>
            <person name="Hart E."/>
            <person name="Haugen E."/>
            <person name="Heath P.D."/>
            <person name="Holmes S."/>
            <person name="Holt K."/>
            <person name="Howden P.J."/>
            <person name="Hunt A.R."/>
            <person name="Hunt S.E."/>
            <person name="Hunter G."/>
            <person name="Isherwood J."/>
            <person name="James R."/>
            <person name="Johnson C."/>
            <person name="Johnson D."/>
            <person name="Joy A."/>
            <person name="Kay M."/>
            <person name="Kershaw J.K."/>
            <person name="Kibukawa M."/>
            <person name="Kimberley A.M."/>
            <person name="King A."/>
            <person name="Knights A.J."/>
            <person name="Lad H."/>
            <person name="Laird G."/>
            <person name="Lawlor S."/>
            <person name="Leongamornlert D.A."/>
            <person name="Lloyd D.M."/>
            <person name="Loveland J."/>
            <person name="Lovell J."/>
            <person name="Lush M.J."/>
            <person name="Lyne R."/>
            <person name="Martin S."/>
            <person name="Mashreghi-Mohammadi M."/>
            <person name="Matthews L."/>
            <person name="Matthews N.S.W."/>
            <person name="McLaren S."/>
            <person name="Milne S."/>
            <person name="Mistry S."/>
            <person name="Moore M.J.F."/>
            <person name="Nickerson T."/>
            <person name="O'Dell C.N."/>
            <person name="Oliver K."/>
            <person name="Palmeiri A."/>
            <person name="Palmer S.A."/>
            <person name="Parker A."/>
            <person name="Patel D."/>
            <person name="Pearce A.V."/>
            <person name="Peck A.I."/>
            <person name="Pelan S."/>
            <person name="Phelps K."/>
            <person name="Phillimore B.J."/>
            <person name="Plumb R."/>
            <person name="Rajan J."/>
            <person name="Raymond C."/>
            <person name="Rouse G."/>
            <person name="Saenphimmachak C."/>
            <person name="Sehra H.K."/>
            <person name="Sheridan E."/>
            <person name="Shownkeen R."/>
            <person name="Sims S."/>
            <person name="Skuce C.D."/>
            <person name="Smith M."/>
            <person name="Steward C."/>
            <person name="Subramanian S."/>
            <person name="Sycamore N."/>
            <person name="Tracey A."/>
            <person name="Tromans A."/>
            <person name="Van Helmond Z."/>
            <person name="Wall M."/>
            <person name="Wallis J.M."/>
            <person name="White S."/>
            <person name="Whitehead S.L."/>
            <person name="Wilkinson J.E."/>
            <person name="Willey D.L."/>
            <person name="Williams H."/>
            <person name="Wilming L."/>
            <person name="Wray P.W."/>
            <person name="Wu Z."/>
            <person name="Coulson A."/>
            <person name="Vaudin M."/>
            <person name="Sulston J.E."/>
            <person name="Durbin R.M."/>
            <person name="Hubbard T."/>
            <person name="Wooster R."/>
            <person name="Dunham I."/>
            <person name="Carter N.P."/>
            <person name="McVean G."/>
            <person name="Ross M.T."/>
            <person name="Harrow J."/>
            <person name="Olson M.V."/>
            <person name="Beck S."/>
            <person name="Rogers J."/>
            <person name="Bentley D.R."/>
        </authorList>
    </citation>
    <scope>NUCLEOTIDE SEQUENCE [LARGE SCALE GENOMIC DNA]</scope>
</reference>
<reference key="4">
    <citation type="journal article" date="2004" name="Genome Res.">
        <title>The status, quality, and expansion of the NIH full-length cDNA project: the Mammalian Gene Collection (MGC).</title>
        <authorList>
            <consortium name="The MGC Project Team"/>
        </authorList>
    </citation>
    <scope>NUCLEOTIDE SEQUENCE [LARGE SCALE MRNA]</scope>
    <scope>VARIANT GLY-241</scope>
    <source>
        <tissue>Pancreas</tissue>
        <tissue>Prostate</tissue>
    </source>
</reference>
<gene>
    <name type="primary">CELA3A</name>
    <name type="synonym">ELA3</name>
    <name type="synonym">ELA3A</name>
</gene>
<protein>
    <recommendedName>
        <fullName>Chymotrypsin-like elastase family member 3A</fullName>
        <ecNumber>3.4.21.70</ecNumber>
    </recommendedName>
    <alternativeName>
        <fullName>Elastase IIIA</fullName>
    </alternativeName>
    <alternativeName>
        <fullName>Elastase-3A</fullName>
    </alternativeName>
    <alternativeName>
        <fullName>Protease E</fullName>
    </alternativeName>
</protein>
<evidence type="ECO:0000250" key="1"/>
<evidence type="ECO:0000255" key="2"/>
<evidence type="ECO:0000255" key="3">
    <source>
        <dbReference type="PROSITE-ProRule" id="PRU00274"/>
    </source>
</evidence>
<evidence type="ECO:0000269" key="4">
    <source>
    </source>
</evidence>
<evidence type="ECO:0000269" key="5">
    <source>
    </source>
</evidence>
<evidence type="ECO:0000269" key="6">
    <source>
    </source>
</evidence>
<evidence type="ECO:0000305" key="7"/>
<dbReference type="EC" id="3.4.21.70"/>
<dbReference type="EMBL" id="M18700">
    <property type="protein sequence ID" value="AAA66350.1"/>
    <property type="molecule type" value="Genomic_DNA"/>
</dbReference>
<dbReference type="EMBL" id="M18693">
    <property type="protein sequence ID" value="AAA66350.1"/>
    <property type="status" value="JOINED"/>
    <property type="molecule type" value="Genomic_DNA"/>
</dbReference>
<dbReference type="EMBL" id="M18694">
    <property type="protein sequence ID" value="AAA66350.1"/>
    <property type="status" value="JOINED"/>
    <property type="molecule type" value="Genomic_DNA"/>
</dbReference>
<dbReference type="EMBL" id="M18695">
    <property type="protein sequence ID" value="AAA66350.1"/>
    <property type="status" value="JOINED"/>
    <property type="molecule type" value="Genomic_DNA"/>
</dbReference>
<dbReference type="EMBL" id="M18696">
    <property type="protein sequence ID" value="AAA66350.1"/>
    <property type="status" value="JOINED"/>
    <property type="molecule type" value="Genomic_DNA"/>
</dbReference>
<dbReference type="EMBL" id="M18697">
    <property type="protein sequence ID" value="AAA66350.1"/>
    <property type="status" value="JOINED"/>
    <property type="molecule type" value="Genomic_DNA"/>
</dbReference>
<dbReference type="EMBL" id="M18698">
    <property type="protein sequence ID" value="AAA66350.1"/>
    <property type="status" value="JOINED"/>
    <property type="molecule type" value="Genomic_DNA"/>
</dbReference>
<dbReference type="EMBL" id="M18699">
    <property type="protein sequence ID" value="AAA66350.1"/>
    <property type="status" value="JOINED"/>
    <property type="molecule type" value="Genomic_DNA"/>
</dbReference>
<dbReference type="EMBL" id="D00306">
    <property type="protein sequence ID" value="BAA00212.1"/>
    <property type="molecule type" value="mRNA"/>
</dbReference>
<dbReference type="EMBL" id="AL590556">
    <property type="status" value="NOT_ANNOTATED_CDS"/>
    <property type="molecule type" value="Genomic_DNA"/>
</dbReference>
<dbReference type="EMBL" id="BC005918">
    <property type="protein sequence ID" value="AAH05918.1"/>
    <property type="molecule type" value="mRNA"/>
</dbReference>
<dbReference type="EMBL" id="BC007028">
    <property type="protein sequence ID" value="AAH07028.1"/>
    <property type="molecule type" value="mRNA"/>
</dbReference>
<dbReference type="EMBL" id="BC015103">
    <property type="protein sequence ID" value="AAH15103.1"/>
    <property type="molecule type" value="mRNA"/>
</dbReference>
<dbReference type="CCDS" id="CCDS220.1"/>
<dbReference type="PIR" id="A29934">
    <property type="entry name" value="A29934"/>
</dbReference>
<dbReference type="RefSeq" id="NP_005738.4">
    <property type="nucleotide sequence ID" value="NM_005747.4"/>
</dbReference>
<dbReference type="SMR" id="P09093"/>
<dbReference type="BioGRID" id="115439">
    <property type="interactions" value="47"/>
</dbReference>
<dbReference type="FunCoup" id="P09093">
    <property type="interactions" value="220"/>
</dbReference>
<dbReference type="IntAct" id="P09093">
    <property type="interactions" value="32"/>
</dbReference>
<dbReference type="MINT" id="P09093"/>
<dbReference type="STRING" id="9606.ENSP00000290122"/>
<dbReference type="MEROPS" id="S01.154"/>
<dbReference type="GlyCosmos" id="P09093">
    <property type="glycosylation" value="1 site, No reported glycans"/>
</dbReference>
<dbReference type="GlyGen" id="P09093">
    <property type="glycosylation" value="2 sites, 1 O-linked glycan (1 site)"/>
</dbReference>
<dbReference type="BioMuta" id="CELA3A"/>
<dbReference type="DMDM" id="288558842"/>
<dbReference type="MassIVE" id="P09093"/>
<dbReference type="PaxDb" id="9606-ENSP00000290122"/>
<dbReference type="PeptideAtlas" id="P09093"/>
<dbReference type="ProteomicsDB" id="52197"/>
<dbReference type="Antibodypedia" id="30054">
    <property type="antibodies" value="169 antibodies from 22 providers"/>
</dbReference>
<dbReference type="DNASU" id="10136"/>
<dbReference type="Ensembl" id="ENST00000290122.8">
    <property type="protein sequence ID" value="ENSP00000290122.3"/>
    <property type="gene ID" value="ENSG00000142789.20"/>
</dbReference>
<dbReference type="GeneID" id="10136"/>
<dbReference type="KEGG" id="hsa:10136"/>
<dbReference type="MANE-Select" id="ENST00000290122.8">
    <property type="protein sequence ID" value="ENSP00000290122.3"/>
    <property type="RefSeq nucleotide sequence ID" value="NM_005747.5"/>
    <property type="RefSeq protein sequence ID" value="NP_005738.4"/>
</dbReference>
<dbReference type="UCSC" id="uc001bfl.4">
    <property type="organism name" value="human"/>
</dbReference>
<dbReference type="AGR" id="HGNC:15944"/>
<dbReference type="CTD" id="10136"/>
<dbReference type="DisGeNET" id="10136"/>
<dbReference type="GeneCards" id="CELA3A"/>
<dbReference type="HGNC" id="HGNC:15944">
    <property type="gene designation" value="CELA3A"/>
</dbReference>
<dbReference type="HPA" id="ENSG00000142789">
    <property type="expression patterns" value="Tissue enriched (pancreas)"/>
</dbReference>
<dbReference type="MIM" id="618693">
    <property type="type" value="gene"/>
</dbReference>
<dbReference type="neXtProt" id="NX_P09093"/>
<dbReference type="OpenTargets" id="ENSG00000142789"/>
<dbReference type="PharmGKB" id="PA27736"/>
<dbReference type="VEuPathDB" id="HostDB:ENSG00000142789"/>
<dbReference type="eggNOG" id="KOG3627">
    <property type="taxonomic scope" value="Eukaryota"/>
</dbReference>
<dbReference type="GeneTree" id="ENSGT01030000234528"/>
<dbReference type="HOGENOM" id="CLU_006842_0_4_1"/>
<dbReference type="InParanoid" id="P09093"/>
<dbReference type="OMA" id="NKTPCYI"/>
<dbReference type="OrthoDB" id="10061449at2759"/>
<dbReference type="PAN-GO" id="P09093">
    <property type="GO annotations" value="3 GO annotations based on evolutionary models"/>
</dbReference>
<dbReference type="PhylomeDB" id="P09093"/>
<dbReference type="TreeFam" id="TF330455"/>
<dbReference type="PathwayCommons" id="P09093"/>
<dbReference type="SignaLink" id="P09093"/>
<dbReference type="BioGRID-ORCS" id="10136">
    <property type="hits" value="11 hits in 1136 CRISPR screens"/>
</dbReference>
<dbReference type="GeneWiki" id="CELA3A"/>
<dbReference type="GenomeRNAi" id="10136"/>
<dbReference type="Pharos" id="P09093">
    <property type="development level" value="Tbio"/>
</dbReference>
<dbReference type="PRO" id="PR:P09093"/>
<dbReference type="Proteomes" id="UP000005640">
    <property type="component" value="Chromosome 1"/>
</dbReference>
<dbReference type="RNAct" id="P09093">
    <property type="molecule type" value="protein"/>
</dbReference>
<dbReference type="Bgee" id="ENSG00000142789">
    <property type="expression patterns" value="Expressed in body of pancreas and 81 other cell types or tissues"/>
</dbReference>
<dbReference type="ExpressionAtlas" id="P09093">
    <property type="expression patterns" value="baseline and differential"/>
</dbReference>
<dbReference type="GO" id="GO:0005615">
    <property type="term" value="C:extracellular space"/>
    <property type="evidence" value="ECO:0000318"/>
    <property type="project" value="GO_Central"/>
</dbReference>
<dbReference type="GO" id="GO:0004252">
    <property type="term" value="F:serine-type endopeptidase activity"/>
    <property type="evidence" value="ECO:0000318"/>
    <property type="project" value="GO_Central"/>
</dbReference>
<dbReference type="GO" id="GO:0006508">
    <property type="term" value="P:proteolysis"/>
    <property type="evidence" value="ECO:0000318"/>
    <property type="project" value="GO_Central"/>
</dbReference>
<dbReference type="CDD" id="cd00190">
    <property type="entry name" value="Tryp_SPc"/>
    <property type="match status" value="1"/>
</dbReference>
<dbReference type="FunFam" id="2.40.10.10:FF:000280">
    <property type="match status" value="1"/>
</dbReference>
<dbReference type="FunFam" id="2.40.10.10:FF:000004">
    <property type="entry name" value="Tryptase gamma 1"/>
    <property type="match status" value="1"/>
</dbReference>
<dbReference type="Gene3D" id="2.40.10.10">
    <property type="entry name" value="Trypsin-like serine proteases"/>
    <property type="match status" value="2"/>
</dbReference>
<dbReference type="InterPro" id="IPR050850">
    <property type="entry name" value="Peptidase_S1_Elastase_sf"/>
</dbReference>
<dbReference type="InterPro" id="IPR009003">
    <property type="entry name" value="Peptidase_S1_PA"/>
</dbReference>
<dbReference type="InterPro" id="IPR043504">
    <property type="entry name" value="Peptidase_S1_PA_chymotrypsin"/>
</dbReference>
<dbReference type="InterPro" id="IPR001314">
    <property type="entry name" value="Peptidase_S1A"/>
</dbReference>
<dbReference type="InterPro" id="IPR001254">
    <property type="entry name" value="Trypsin_dom"/>
</dbReference>
<dbReference type="InterPro" id="IPR018114">
    <property type="entry name" value="TRYPSIN_HIS"/>
</dbReference>
<dbReference type="InterPro" id="IPR033116">
    <property type="entry name" value="TRYPSIN_SER"/>
</dbReference>
<dbReference type="PANTHER" id="PTHR24257">
    <property type="entry name" value="CHYMOTRYPSIN-LIKE ELASTASE FAMILY MEMBER"/>
    <property type="match status" value="1"/>
</dbReference>
<dbReference type="PANTHER" id="PTHR24257:SF11">
    <property type="entry name" value="CHYMOTRYPSIN-LIKE ELASTASE FAMILY MEMBER 3A"/>
    <property type="match status" value="1"/>
</dbReference>
<dbReference type="Pfam" id="PF00089">
    <property type="entry name" value="Trypsin"/>
    <property type="match status" value="1"/>
</dbReference>
<dbReference type="PRINTS" id="PR00722">
    <property type="entry name" value="CHYMOTRYPSIN"/>
</dbReference>
<dbReference type="SMART" id="SM00020">
    <property type="entry name" value="Tryp_SPc"/>
    <property type="match status" value="1"/>
</dbReference>
<dbReference type="SUPFAM" id="SSF50494">
    <property type="entry name" value="Trypsin-like serine proteases"/>
    <property type="match status" value="1"/>
</dbReference>
<dbReference type="PROSITE" id="PS50240">
    <property type="entry name" value="TRYPSIN_DOM"/>
    <property type="match status" value="1"/>
</dbReference>
<dbReference type="PROSITE" id="PS00134">
    <property type="entry name" value="TRYPSIN_HIS"/>
    <property type="match status" value="1"/>
</dbReference>
<dbReference type="PROSITE" id="PS00135">
    <property type="entry name" value="TRYPSIN_SER"/>
    <property type="match status" value="1"/>
</dbReference>
<accession>P09093</accession>
<accession>B1AQ53</accession>
<accession>Q9BRW4</accession>
<comment type="function">
    <text>Efficient protease with alanine specificity but only little elastolytic activity.</text>
</comment>
<comment type="catalytic activity">
    <reaction>
        <text>Preferential cleavage: Ala-|-Xaa. Does not hydrolyze elastin.</text>
        <dbReference type="EC" id="3.4.21.70"/>
    </reaction>
</comment>
<comment type="interaction">
    <interactant intactId="EBI-8646391">
        <id>P09093</id>
    </interactant>
    <interactant intactId="EBI-11522760">
        <id>Q6RW13-2</id>
        <label>AGTRAP</label>
    </interactant>
    <organismsDiffer>false</organismsDiffer>
    <experiments>3</experiments>
</comment>
<comment type="similarity">
    <text evidence="3">Belongs to the peptidase S1 family. Elastase subfamily.</text>
</comment>
<organism>
    <name type="scientific">Homo sapiens</name>
    <name type="common">Human</name>
    <dbReference type="NCBI Taxonomy" id="9606"/>
    <lineage>
        <taxon>Eukaryota</taxon>
        <taxon>Metazoa</taxon>
        <taxon>Chordata</taxon>
        <taxon>Craniata</taxon>
        <taxon>Vertebrata</taxon>
        <taxon>Euteleostomi</taxon>
        <taxon>Mammalia</taxon>
        <taxon>Eutheria</taxon>
        <taxon>Euarchontoglires</taxon>
        <taxon>Primates</taxon>
        <taxon>Haplorrhini</taxon>
        <taxon>Catarrhini</taxon>
        <taxon>Hominidae</taxon>
        <taxon>Homo</taxon>
    </lineage>
</organism>
<sequence>MMLRLLSSLLLVAVASGYGPPSSHSSSRVVHGEDAVPYSWPWQVSLQYEKSGSFYHTCGGSLIAPDWVVTAGHCISRDLTYQVVLGEYNLAVKEGPEQVIPINSEELFVHPLWNRSCVACGNDIALIKLSRSAQLGDAVQLASLPPAGDILPNKTPCYITGWGRLYTNGPLPDKLQQARLPVVDYKHCSRWNWWGSTVKKTMVCAGGYIRSGCNGDSGGPLNCPTEDGGWQVHGVTSFVSAFGCNFIWKPTVFTRVSAFIDWIEETIASH</sequence>
<name>CEL3A_HUMAN</name>
<proteinExistence type="evidence at protein level"/>
<feature type="signal peptide" description="Or 16" evidence="2">
    <location>
        <begin position="1"/>
        <end position="15"/>
    </location>
</feature>
<feature type="propeptide" id="PRO_0000027697" description="Activation peptide" evidence="2">
    <location>
        <begin position="16"/>
        <end position="28"/>
    </location>
</feature>
<feature type="chain" id="PRO_0000027698" description="Chymotrypsin-like elastase family member 3A">
    <location>
        <begin position="29"/>
        <end position="270"/>
    </location>
</feature>
<feature type="domain" description="Peptidase S1" evidence="3">
    <location>
        <begin position="29"/>
        <end position="268"/>
    </location>
</feature>
<feature type="active site" description="Charge relay system" evidence="1">
    <location>
        <position position="73"/>
    </location>
</feature>
<feature type="active site" description="Charge relay system" evidence="1">
    <location>
        <position position="123"/>
    </location>
</feature>
<feature type="active site" description="Charge relay system" evidence="1">
    <location>
        <position position="217"/>
    </location>
</feature>
<feature type="glycosylation site" description="N-linked (GlcNAc...) asparagine" evidence="2">
    <location>
        <position position="114"/>
    </location>
</feature>
<feature type="disulfide bond" evidence="3">
    <location>
        <begin position="58"/>
        <end position="74"/>
    </location>
</feature>
<feature type="disulfide bond" evidence="7">
    <location>
        <begin position="117"/>
        <end position="120"/>
    </location>
</feature>
<feature type="disulfide bond" evidence="3">
    <location>
        <begin position="157"/>
        <end position="223"/>
    </location>
</feature>
<feature type="disulfide bond" evidence="3">
    <location>
        <begin position="188"/>
        <end position="204"/>
    </location>
</feature>
<feature type="disulfide bond" evidence="3">
    <location>
        <begin position="213"/>
        <end position="244"/>
    </location>
</feature>
<feature type="sequence variant" id="VAR_059783" description="In dbSNP:rs7531336.">
    <original>H</original>
    <variation>R</variation>
    <location>
        <position position="24"/>
    </location>
</feature>
<feature type="sequence variant" id="VAR_059784" description="In dbSNP:rs7533776.">
    <original>S</original>
    <variation>P</variation>
    <location>
        <position position="25"/>
    </location>
</feature>
<feature type="sequence variant" id="VAR_059785" description="In dbSNP:rs7519660.">
    <original>H</original>
    <variation>N</variation>
    <location>
        <position position="31"/>
    </location>
</feature>
<feature type="sequence variant" id="VAR_051838" description="In dbSNP:rs3820285." evidence="4 5 6">
    <original>A</original>
    <variation>G</variation>
    <location>
        <position position="241"/>
    </location>
</feature>
<feature type="sequence conflict" description="In Ref. 4; AAH05918." evidence="7" ref="4">
    <original>I</original>
    <variation>T</variation>
    <location>
        <position position="63"/>
    </location>
</feature>
<feature type="sequence conflict" description="In Ref. 1; AAA66350." evidence="7" ref="1">
    <location>
        <position position="106"/>
    </location>
</feature>
<feature type="sequence conflict" description="In Ref. 4; AAH05918." evidence="7" ref="4">
    <original>K</original>
    <variation>E</variation>
    <location>
        <position position="174"/>
    </location>
</feature>